<keyword id="KW-0028">Amino-acid biosynthesis</keyword>
<keyword id="KW-0057">Aromatic amino acid biosynthesis</keyword>
<keyword id="KW-0210">Decarboxylase</keyword>
<keyword id="KW-0456">Lyase</keyword>
<keyword id="KW-1185">Reference proteome</keyword>
<keyword id="KW-0822">Tryptophan biosynthesis</keyword>
<accession>Q2FYR6</accession>
<name>TRPC_STAA8</name>
<dbReference type="EC" id="4.1.1.48" evidence="1"/>
<dbReference type="EMBL" id="CP000253">
    <property type="protein sequence ID" value="ABD30464.1"/>
    <property type="molecule type" value="Genomic_DNA"/>
</dbReference>
<dbReference type="RefSeq" id="WP_000154116.1">
    <property type="nucleotide sequence ID" value="NZ_LS483365.1"/>
</dbReference>
<dbReference type="RefSeq" id="YP_499896.1">
    <property type="nucleotide sequence ID" value="NC_007795.1"/>
</dbReference>
<dbReference type="SMR" id="Q2FYR6"/>
<dbReference type="STRING" id="93061.SAOUHSC_01369"/>
<dbReference type="PaxDb" id="1280-SAXN108_1386"/>
<dbReference type="GeneID" id="3920778"/>
<dbReference type="KEGG" id="sao:SAOUHSC_01369"/>
<dbReference type="PATRIC" id="fig|93061.5.peg.1253"/>
<dbReference type="eggNOG" id="COG0134">
    <property type="taxonomic scope" value="Bacteria"/>
</dbReference>
<dbReference type="HOGENOM" id="CLU_034247_2_1_9"/>
<dbReference type="OrthoDB" id="9804217at2"/>
<dbReference type="UniPathway" id="UPA00035">
    <property type="reaction ID" value="UER00043"/>
</dbReference>
<dbReference type="PRO" id="PR:Q2FYR6"/>
<dbReference type="Proteomes" id="UP000008816">
    <property type="component" value="Chromosome"/>
</dbReference>
<dbReference type="GO" id="GO:0004425">
    <property type="term" value="F:indole-3-glycerol-phosphate synthase activity"/>
    <property type="evidence" value="ECO:0000318"/>
    <property type="project" value="GO_Central"/>
</dbReference>
<dbReference type="GO" id="GO:0004640">
    <property type="term" value="F:phosphoribosylanthranilate isomerase activity"/>
    <property type="evidence" value="ECO:0000318"/>
    <property type="project" value="GO_Central"/>
</dbReference>
<dbReference type="GO" id="GO:0000162">
    <property type="term" value="P:L-tryptophan biosynthetic process"/>
    <property type="evidence" value="ECO:0000318"/>
    <property type="project" value="GO_Central"/>
</dbReference>
<dbReference type="CDD" id="cd00331">
    <property type="entry name" value="IGPS"/>
    <property type="match status" value="1"/>
</dbReference>
<dbReference type="FunFam" id="3.20.20.70:FF:000212">
    <property type="entry name" value="Indole-3-glycerol phosphate synthase"/>
    <property type="match status" value="1"/>
</dbReference>
<dbReference type="Gene3D" id="3.20.20.70">
    <property type="entry name" value="Aldolase class I"/>
    <property type="match status" value="1"/>
</dbReference>
<dbReference type="HAMAP" id="MF_00134_B">
    <property type="entry name" value="IGPS_B"/>
    <property type="match status" value="1"/>
</dbReference>
<dbReference type="InterPro" id="IPR013785">
    <property type="entry name" value="Aldolase_TIM"/>
</dbReference>
<dbReference type="InterPro" id="IPR045186">
    <property type="entry name" value="Indole-3-glycerol_P_synth"/>
</dbReference>
<dbReference type="InterPro" id="IPR013798">
    <property type="entry name" value="Indole-3-glycerol_P_synth_dom"/>
</dbReference>
<dbReference type="InterPro" id="IPR001468">
    <property type="entry name" value="Indole-3-GlycerolPSynthase_CS"/>
</dbReference>
<dbReference type="InterPro" id="IPR011060">
    <property type="entry name" value="RibuloseP-bd_barrel"/>
</dbReference>
<dbReference type="NCBIfam" id="NF001371">
    <property type="entry name" value="PRK00278.1-3"/>
    <property type="match status" value="1"/>
</dbReference>
<dbReference type="PANTHER" id="PTHR22854:SF2">
    <property type="entry name" value="INDOLE-3-GLYCEROL-PHOSPHATE SYNTHASE"/>
    <property type="match status" value="1"/>
</dbReference>
<dbReference type="PANTHER" id="PTHR22854">
    <property type="entry name" value="TRYPTOPHAN BIOSYNTHESIS PROTEIN"/>
    <property type="match status" value="1"/>
</dbReference>
<dbReference type="Pfam" id="PF00218">
    <property type="entry name" value="IGPS"/>
    <property type="match status" value="1"/>
</dbReference>
<dbReference type="SUPFAM" id="SSF51366">
    <property type="entry name" value="Ribulose-phoshate binding barrel"/>
    <property type="match status" value="1"/>
</dbReference>
<dbReference type="PROSITE" id="PS00614">
    <property type="entry name" value="IGPS"/>
    <property type="match status" value="1"/>
</dbReference>
<sequence>MTILSEIVKYKQSLLQNGYYQDKLNTLKSVKIQNKKSFINAIEKEPKLAIIAEIKSKSPTVNDLPERDLSQQISDYDQYGANAVSILTDEKYFGGSFERLQALTTKTTLPVLCKDFIIDPLQIDVAKQAGASMILLIVNILSDKQLKDLYNYAISQNLEVLVEVHDRHELERAYKVNAKLIGVNNRDLKRFVTNVEHTNTILENKKTNHYYISESGIHDASDVRKILHSGIDGLLIGEALMRCDNLSEFLPQLKMQKVKS</sequence>
<feature type="chain" id="PRO_1000095889" description="Indole-3-glycerol phosphate synthase">
    <location>
        <begin position="1"/>
        <end position="260"/>
    </location>
</feature>
<reference key="1">
    <citation type="book" date="2006" name="Gram positive pathogens, 2nd edition">
        <title>The Staphylococcus aureus NCTC 8325 genome.</title>
        <editorList>
            <person name="Fischetti V."/>
            <person name="Novick R."/>
            <person name="Ferretti J."/>
            <person name="Portnoy D."/>
            <person name="Rood J."/>
        </editorList>
        <authorList>
            <person name="Gillaspy A.F."/>
            <person name="Worrell V."/>
            <person name="Orvis J."/>
            <person name="Roe B.A."/>
            <person name="Dyer D.W."/>
            <person name="Iandolo J.J."/>
        </authorList>
    </citation>
    <scope>NUCLEOTIDE SEQUENCE [LARGE SCALE GENOMIC DNA]</scope>
    <source>
        <strain>NCTC 8325 / PS 47</strain>
    </source>
</reference>
<protein>
    <recommendedName>
        <fullName evidence="1">Indole-3-glycerol phosphate synthase</fullName>
        <shortName evidence="1">IGPS</shortName>
        <ecNumber evidence="1">4.1.1.48</ecNumber>
    </recommendedName>
</protein>
<gene>
    <name evidence="1" type="primary">trpC</name>
    <name type="ordered locus">SAOUHSC_01369</name>
</gene>
<comment type="catalytic activity">
    <reaction evidence="1">
        <text>1-(2-carboxyphenylamino)-1-deoxy-D-ribulose 5-phosphate + H(+) = (1S,2R)-1-C-(indol-3-yl)glycerol 3-phosphate + CO2 + H2O</text>
        <dbReference type="Rhea" id="RHEA:23476"/>
        <dbReference type="ChEBI" id="CHEBI:15377"/>
        <dbReference type="ChEBI" id="CHEBI:15378"/>
        <dbReference type="ChEBI" id="CHEBI:16526"/>
        <dbReference type="ChEBI" id="CHEBI:58613"/>
        <dbReference type="ChEBI" id="CHEBI:58866"/>
        <dbReference type="EC" id="4.1.1.48"/>
    </reaction>
</comment>
<comment type="pathway">
    <text evidence="1">Amino-acid biosynthesis; L-tryptophan biosynthesis; L-tryptophan from chorismate: step 4/5.</text>
</comment>
<comment type="similarity">
    <text evidence="1">Belongs to the TrpC family.</text>
</comment>
<evidence type="ECO:0000255" key="1">
    <source>
        <dbReference type="HAMAP-Rule" id="MF_00134"/>
    </source>
</evidence>
<organism>
    <name type="scientific">Staphylococcus aureus (strain NCTC 8325 / PS 47)</name>
    <dbReference type="NCBI Taxonomy" id="93061"/>
    <lineage>
        <taxon>Bacteria</taxon>
        <taxon>Bacillati</taxon>
        <taxon>Bacillota</taxon>
        <taxon>Bacilli</taxon>
        <taxon>Bacillales</taxon>
        <taxon>Staphylococcaceae</taxon>
        <taxon>Staphylococcus</taxon>
    </lineage>
</organism>
<proteinExistence type="inferred from homology"/>